<dbReference type="EMBL" id="X01587">
    <property type="protein sequence ID" value="CAA25747.1"/>
    <property type="status" value="ALT_INIT"/>
    <property type="molecule type" value="Genomic_DNA"/>
</dbReference>
<dbReference type="EMBL" id="X01587">
    <property type="protein sequence ID" value="CAA25743.1"/>
    <property type="status" value="ALT_INIT"/>
    <property type="molecule type" value="Genomic_DNA"/>
</dbReference>
<dbReference type="BMRB" id="P12934"/>
<dbReference type="SMR" id="P12934"/>
<dbReference type="GlyCosmos" id="P12934">
    <property type="glycosylation" value="2 sites, No reported glycans"/>
</dbReference>
<dbReference type="Proteomes" id="UP000007923">
    <property type="component" value="Genome"/>
</dbReference>
<dbReference type="GO" id="GO:0016020">
    <property type="term" value="C:membrane"/>
    <property type="evidence" value="ECO:0007669"/>
    <property type="project" value="UniProtKB-UniRule"/>
</dbReference>
<dbReference type="GO" id="GO:0019031">
    <property type="term" value="C:viral envelope"/>
    <property type="evidence" value="ECO:0007669"/>
    <property type="project" value="UniProtKB-KW"/>
</dbReference>
<dbReference type="GO" id="GO:0055036">
    <property type="term" value="C:virion membrane"/>
    <property type="evidence" value="ECO:0007669"/>
    <property type="project" value="UniProtKB-SubCell"/>
</dbReference>
<dbReference type="GO" id="GO:0075513">
    <property type="term" value="P:caveolin-mediated endocytosis of virus by host cell"/>
    <property type="evidence" value="ECO:0007669"/>
    <property type="project" value="UniProtKB-KW"/>
</dbReference>
<dbReference type="GO" id="GO:0039654">
    <property type="term" value="P:fusion of virus membrane with host endosome membrane"/>
    <property type="evidence" value="ECO:0007669"/>
    <property type="project" value="UniProtKB-KW"/>
</dbReference>
<dbReference type="GO" id="GO:0019062">
    <property type="term" value="P:virion attachment to host cell"/>
    <property type="evidence" value="ECO:0007669"/>
    <property type="project" value="UniProtKB-UniRule"/>
</dbReference>
<dbReference type="HAMAP" id="MF_04075">
    <property type="entry name" value="HBV_HBSAG"/>
    <property type="match status" value="1"/>
</dbReference>
<dbReference type="InterPro" id="IPR000349">
    <property type="entry name" value="HBV_HBSAG"/>
</dbReference>
<dbReference type="Pfam" id="PF00695">
    <property type="entry name" value="vMSA"/>
    <property type="match status" value="1"/>
</dbReference>
<sequence length="400" mass="43542">MGGWSSKPRQGMGTNLSVPNPLGFFPDHQLDPAFGANSHNPDWDFNPNKDHWPEANQVGAGAFGPGFTPPHGGLLGWSPQAQGVLTTVPVAPPPASTNRQSGRQPTPISPPLRDSHPQAMQWNSTTFHQALLDPRVRGLYFPAGGSSSGTVNPVPTTASPISSISSRTGDPAPNMENTTSGFLGPLLVLQAGFFLLTRILTIPQSLDSWWTSLNFLGGAPTCPGQNSQSPTSNHSPTSCPPICPGYRWMCLRRFIIFLFILLLCLIFLLVLLDYQGMLPVCPLLPGTSTTSTGPCKTCTIPAQGTSMFPSCCCTKPSDGNCTCIPIPSSWAFARFLWEGASVRFSWLSLLVPFVQWFVGLSPTVWLSVIWMMWYWGPSLYNILSPFLPLLPIFFCLWVYI</sequence>
<accession>P12934</accession>
<accession>Q67860</accession>
<evidence type="ECO:0000250" key="1">
    <source>
        <dbReference type="UniProtKB" id="P03138"/>
    </source>
</evidence>
<evidence type="ECO:0000250" key="2">
    <source>
        <dbReference type="UniProtKB" id="P03141"/>
    </source>
</evidence>
<evidence type="ECO:0000255" key="3">
    <source>
        <dbReference type="HAMAP-Rule" id="MF_04075"/>
    </source>
</evidence>
<evidence type="ECO:0000256" key="4">
    <source>
        <dbReference type="SAM" id="MobiDB-lite"/>
    </source>
</evidence>
<evidence type="ECO:0000305" key="5"/>
<name>HBSAG_HBVC3</name>
<organism>
    <name type="scientific">Hepatitis B virus genotype C subtype adr (strain Japan/adr4/1983)</name>
    <name type="common">HBV-C</name>
    <dbReference type="NCBI Taxonomy" id="10409"/>
    <lineage>
        <taxon>Viruses</taxon>
        <taxon>Riboviria</taxon>
        <taxon>Pararnavirae</taxon>
        <taxon>Artverviricota</taxon>
        <taxon>Revtraviricetes</taxon>
        <taxon>Blubervirales</taxon>
        <taxon>Hepadnaviridae</taxon>
        <taxon>Orthohepadnavirus</taxon>
        <taxon>Hepatitis B virus</taxon>
    </lineage>
</organism>
<proteinExistence type="evidence at protein level"/>
<organismHost>
    <name type="scientific">Homo sapiens</name>
    <name type="common">Human</name>
    <dbReference type="NCBI Taxonomy" id="9606"/>
</organismHost>
<organismHost>
    <name type="scientific">Pan troglodytes</name>
    <name type="common">Chimpanzee</name>
    <dbReference type="NCBI Taxonomy" id="9598"/>
</organismHost>
<gene>
    <name evidence="3" type="primary">S</name>
</gene>
<feature type="initiator methionine" description="Removed; by host" evidence="3">
    <location>
        <position position="1"/>
    </location>
</feature>
<feature type="chain" id="PRO_0000038089" description="Large envelope protein" evidence="3">
    <location>
        <begin position="2"/>
        <end position="400"/>
    </location>
</feature>
<feature type="topological domain" description="Intravirion; in internal conformation" evidence="3">
    <location>
        <begin position="2"/>
        <end position="253"/>
    </location>
</feature>
<feature type="topological domain" description="Virion surface; in external conformation" evidence="3">
    <location>
        <begin position="2"/>
        <end position="181"/>
    </location>
</feature>
<feature type="transmembrane region" description="Helical; Name=TM1; Note=In external conformation" evidence="3">
    <location>
        <begin position="182"/>
        <end position="202"/>
    </location>
</feature>
<feature type="topological domain" description="Intravirion; in external conformation" evidence="3">
    <location>
        <begin position="203"/>
        <end position="253"/>
    </location>
</feature>
<feature type="transmembrane region" description="Helical; Name=TM2" evidence="3">
    <location>
        <begin position="254"/>
        <end position="274"/>
    </location>
</feature>
<feature type="topological domain" description="Virion surface" evidence="3">
    <location>
        <begin position="275"/>
        <end position="348"/>
    </location>
</feature>
<feature type="transmembrane region" description="Helical" evidence="3">
    <location>
        <begin position="349"/>
        <end position="369"/>
    </location>
</feature>
<feature type="topological domain" description="Intravirion" evidence="3">
    <location>
        <begin position="370"/>
        <end position="375"/>
    </location>
</feature>
<feature type="transmembrane region" description="Helical; Name=TM3" evidence="3">
    <location>
        <begin position="376"/>
        <end position="398"/>
    </location>
</feature>
<feature type="topological domain" description="Virion surface" evidence="3">
    <location>
        <begin position="399"/>
        <end position="400"/>
    </location>
</feature>
<feature type="region of interest" description="Disordered" evidence="4">
    <location>
        <begin position="1"/>
        <end position="53"/>
    </location>
</feature>
<feature type="region of interest" description="Pre-S" evidence="3">
    <location>
        <begin position="2"/>
        <end position="174"/>
    </location>
</feature>
<feature type="region of interest" description="Pre-S1" evidence="3">
    <location>
        <begin position="2"/>
        <end position="119"/>
    </location>
</feature>
<feature type="region of interest" description="Disordered" evidence="4">
    <location>
        <begin position="88"/>
        <end position="118"/>
    </location>
</feature>
<feature type="region of interest" description="Pre-S2" evidence="3">
    <location>
        <begin position="120"/>
        <end position="174"/>
    </location>
</feature>
<feature type="region of interest" description="Disordered" evidence="4">
    <location>
        <begin position="145"/>
        <end position="169"/>
    </location>
</feature>
<feature type="compositionally biased region" description="Polar residues" evidence="4">
    <location>
        <begin position="96"/>
        <end position="106"/>
    </location>
</feature>
<feature type="compositionally biased region" description="Low complexity" evidence="4">
    <location>
        <begin position="155"/>
        <end position="166"/>
    </location>
</feature>
<feature type="lipid moiety-binding region" description="N-myristoyl glycine; by host" evidence="3">
    <location>
        <position position="2"/>
    </location>
</feature>
<feature type="glycosylation site" description="N-linked (GlcNAc...) asparagine; by host" evidence="3">
    <location>
        <position position="320"/>
    </location>
</feature>
<feature type="splice variant" id="VSP_031388" description="In isoform S." evidence="5">
    <location>
        <begin position="1"/>
        <end position="174"/>
    </location>
</feature>
<feature type="splice variant" id="VSP_031389" description="In isoform M." evidence="5">
    <location>
        <begin position="1"/>
        <end position="119"/>
    </location>
</feature>
<feature type="modified residue" description="N-acetylmethionine" evidence="5">
    <location sequence="P12934-2">
        <position position="1"/>
    </location>
</feature>
<feature type="glycosylation site" description="N-linked (GlcNAc...) asparagine" evidence="5">
    <location sequence="P12934-2">
        <position position="4"/>
    </location>
</feature>
<comment type="function">
    <text evidence="3">The large envelope protein exists in two topological conformations, one which is termed 'external' or Le-HBsAg and the other 'internal' or Li-HBsAg. In its external conformation the protein attaches the virus to cell receptors and thereby initiating infection. This interaction determines the species specificity and liver tropism. This attachment induces virion internalization predominantly through caveolin-mediated endocytosis. The large envelope protein also assures fusion between virion membrane and endosomal membrane. In its internal conformation the protein plays a role in virion morphogenesis and mediates the contact with the nucleocapsid like a matrix protein.</text>
</comment>
<comment type="function">
    <text evidence="3">The middle envelope protein plays an important role in the budding of the virion. It is involved in the induction of budding in a nucleocapsid independent way. In this process the majority of envelope proteins bud to form subviral lipoprotein particles of 22 nm of diameter that do not contain a nucleocapsid.</text>
</comment>
<comment type="subunit">
    <molecule>Isoform L</molecule>
    <text evidence="2">In its internal form (Li-HBsAg), interacts with the capsid protein and with the isoform S. Interacts with host chaperone CANX.</text>
</comment>
<comment type="subunit">
    <molecule>Isoform M</molecule>
    <text evidence="2">Associates with host chaperone CANX through its pre-S2 N glycan; this association may be essential for isoform M proper secretion.</text>
</comment>
<comment type="subunit">
    <molecule>Isoform S</molecule>
    <text evidence="2">Interacts with isoform L. Interacts with the antigens of satellite virus HDV (HDVAgs); this interaction is required for encapsidation of HDV genomic RNA.</text>
</comment>
<comment type="subcellular location">
    <subcellularLocation>
        <location evidence="3">Virion membrane</location>
    </subcellularLocation>
</comment>
<comment type="alternative products">
    <event type="alternative splicing"/>
    <event type="alternative initiation"/>
    <isoform>
        <id>P12934-1</id>
        <name>L</name>
        <name>Large envelope protein</name>
        <name>LHB</name>
        <name>L-HBsAg</name>
        <sequence type="displayed"/>
    </isoform>
    <isoform>
        <id>P12934-2</id>
        <name>M</name>
        <name>Middle envelope protein</name>
        <name>MHB</name>
        <name>M-HBsAg</name>
        <sequence type="described" ref="VSP_031389"/>
    </isoform>
    <isoform>
        <id>P12934-3</id>
        <name>S</name>
        <name>Small envelope protein</name>
        <name>SHB</name>
        <name>S-HBsAg</name>
        <sequence type="described" ref="VSP_031388"/>
    </isoform>
</comment>
<comment type="domain">
    <text evidence="3">The large envelope protein is synthesized with the pre-S region at the cytosolic side of the endoplasmic reticulum and, hence will be within the virion after budding. Therefore the pre-S region is not N-glycosylated. Later a post-translational translocation of N-terminal pre-S and TM1 domains occur in about 50% of proteins at the virion surface. These molecules change their topology by an unknown mechanism, resulting in exposure of pre-S region at virion surface. For isoform M in contrast, the pre-S2 region is translocated cotranslationally to the endoplasmic reticulum lumen and is N-glycosylated.</text>
</comment>
<comment type="PTM">
    <text evidence="1 3">Isoform M is N-terminally acetylated by host at a ratio of 90%, and N-glycosylated by host at the pre-S2 region.</text>
</comment>
<comment type="PTM">
    <text evidence="3">Myristoylated.</text>
</comment>
<comment type="biotechnology">
    <text>Systematic vaccination of individuals at risk of exposure to the virus has been the main method of controlling the morbidity and mortality associated with hepatitis B. The first hepatitis B vaccine was manufactured by the purification and inactivation of HBsAg obtained from the plasma of chronic hepatitis B virus carriers. The vaccine is now produced by recombinant DNA techniques and expression of the S isoform in yeast cells. The pre-S region do not seem to induce strong enough antigenic response.</text>
</comment>
<comment type="similarity">
    <text evidence="3">Belongs to the orthohepadnavirus major surface antigen family.</text>
</comment>
<comment type="sequence caution" evidence="5">
    <conflict type="erroneous initiation">
        <sequence resource="EMBL-CDS" id="CAA25743"/>
    </conflict>
</comment>
<comment type="sequence caution" evidence="5">
    <conflict type="erroneous initiation">
        <sequence resource="EMBL-CDS" id="CAA25747"/>
    </conflict>
</comment>
<reference key="1">
    <citation type="journal article" date="1983" name="Nucleic Acids Res.">
        <title>Cloning and structural analyses of hepatitis B virus DNAs, subtype adr.</title>
        <authorList>
            <person name="Fujiyama A."/>
            <person name="Miyanohara A."/>
            <person name="Nozaki C."/>
            <person name="Yoneyama T."/>
            <person name="Ohtomo N."/>
            <person name="Matsubara K."/>
        </authorList>
    </citation>
    <scope>NUCLEOTIDE SEQUENCE [GENOMIC DNA]</scope>
</reference>
<reference key="2">
    <citation type="journal article" date="1996" name="Intervirology">
        <title>Functions of the large hepatitis B virus surface protein in viral particle morphogenesis.</title>
        <authorList>
            <person name="Bruss V."/>
            <person name="Gerhardt E."/>
            <person name="Vieluf K."/>
            <person name="Wunderlich G."/>
        </authorList>
    </citation>
    <scope>REVIEW</scope>
</reference>
<reference key="3">
    <citation type="journal article" date="1998" name="Adv. Exp. Med. Biol.">
        <title>Role of glycan processing in hepatitis B virus envelope protein trafficking.</title>
        <authorList>
            <person name="Block T.M."/>
            <person name="Lu X."/>
            <person name="Mehta A."/>
            <person name="Park J."/>
            <person name="Blumberg B.S."/>
            <person name="Dwek R."/>
        </authorList>
    </citation>
    <scope>REVIEW</scope>
</reference>
<reference key="4">
    <citation type="journal article" date="2004" name="Virus Res.">
        <title>Envelopment of the hepatitis B virus nucleocapsid.</title>
        <authorList>
            <person name="Bruss V."/>
        </authorList>
    </citation>
    <scope>REVIEW</scope>
</reference>
<reference key="5">
    <citation type="journal article" date="2006" name="Cancer Sci.">
        <title>Hepatitis B virus pre-S mutants, endoplasmic reticulum stress and hepatocarcinogenesis.</title>
        <authorList>
            <person name="Wang H.C."/>
            <person name="Huang W."/>
            <person name="Lai M.D."/>
            <person name="Su I.J."/>
        </authorList>
    </citation>
    <scope>REVIEW</scope>
</reference>
<protein>
    <recommendedName>
        <fullName evidence="3">Large envelope protein</fullName>
    </recommendedName>
    <alternativeName>
        <fullName evidence="3">L glycoprotein</fullName>
    </alternativeName>
    <alternativeName>
        <fullName evidence="3">L-HBsAg</fullName>
        <shortName evidence="3">LHB</shortName>
    </alternativeName>
    <alternativeName>
        <fullName evidence="3">Large S protein</fullName>
    </alternativeName>
    <alternativeName>
        <fullName evidence="3">Large surface protein</fullName>
    </alternativeName>
    <alternativeName>
        <fullName evidence="3">Major surface antigen</fullName>
    </alternativeName>
</protein>
<keyword id="KW-0007">Acetylation</keyword>
<keyword id="KW-0024">Alternative initiation</keyword>
<keyword id="KW-0025">Alternative splicing</keyword>
<keyword id="KW-1166">Caveolin-mediated endocytosis of virus by host</keyword>
<keyword id="KW-1170">Fusion of virus membrane with host endosomal membrane</keyword>
<keyword id="KW-1168">Fusion of virus membrane with host membrane</keyword>
<keyword id="KW-0325">Glycoprotein</keyword>
<keyword id="KW-0945">Host-virus interaction</keyword>
<keyword id="KW-0449">Lipoprotein</keyword>
<keyword id="KW-0472">Membrane</keyword>
<keyword id="KW-0519">Myristate</keyword>
<keyword id="KW-0812">Transmembrane</keyword>
<keyword id="KW-1133">Transmembrane helix</keyword>
<keyword id="KW-1161">Viral attachment to host cell</keyword>
<keyword id="KW-0261">Viral envelope protein</keyword>
<keyword id="KW-1162">Viral penetration into host cytoplasm</keyword>
<keyword id="KW-0946">Virion</keyword>
<keyword id="KW-1164">Virus endocytosis by host</keyword>
<keyword id="KW-1160">Virus entry into host cell</keyword>